<keyword id="KW-0002">3D-structure</keyword>
<keyword id="KW-0378">Hydrolase</keyword>
<keyword id="KW-1185">Reference proteome</keyword>
<name>CGHLE_CORGL</name>
<feature type="chain" id="PRO_0000457713" description="Probable esterase Cgl0839">
    <location>
        <begin position="1"/>
        <end position="349"/>
    </location>
</feature>
<feature type="domain" description="AB hydrolase-1" evidence="1">
    <location>
        <begin position="60"/>
        <end position="329"/>
    </location>
</feature>
<feature type="active site" description="Nucleophile" evidence="7">
    <location>
        <position position="142"/>
    </location>
</feature>
<feature type="active site" evidence="7">
    <location>
        <position position="296"/>
    </location>
</feature>
<feature type="active site" evidence="7">
    <location>
        <position position="325"/>
    </location>
</feature>
<feature type="helix" evidence="11">
    <location>
        <begin position="5"/>
        <end position="7"/>
    </location>
</feature>
<feature type="helix" evidence="11">
    <location>
        <begin position="9"/>
        <end position="12"/>
    </location>
</feature>
<feature type="strand" evidence="11">
    <location>
        <begin position="16"/>
        <end position="19"/>
    </location>
</feature>
<feature type="strand" evidence="11">
    <location>
        <begin position="30"/>
        <end position="33"/>
    </location>
</feature>
<feature type="strand" evidence="11">
    <location>
        <begin position="35"/>
        <end position="42"/>
    </location>
</feature>
<feature type="strand" evidence="11">
    <location>
        <begin position="51"/>
        <end position="55"/>
    </location>
</feature>
<feature type="helix" evidence="11">
    <location>
        <begin position="63"/>
        <end position="68"/>
    </location>
</feature>
<feature type="strand" evidence="11">
    <location>
        <begin position="74"/>
        <end position="76"/>
    </location>
</feature>
<feature type="turn" evidence="11">
    <location>
        <begin position="78"/>
        <end position="80"/>
    </location>
</feature>
<feature type="strand" evidence="11">
    <location>
        <begin position="81"/>
        <end position="86"/>
    </location>
</feature>
<feature type="strand" evidence="11">
    <location>
        <begin position="91"/>
        <end position="95"/>
    </location>
</feature>
<feature type="turn" evidence="11">
    <location>
        <begin position="97"/>
        <end position="99"/>
    </location>
</feature>
<feature type="helix" evidence="11">
    <location>
        <begin position="103"/>
        <end position="105"/>
    </location>
</feature>
<feature type="helix" evidence="11">
    <location>
        <begin position="107"/>
        <end position="109"/>
    </location>
</feature>
<feature type="helix" evidence="11">
    <location>
        <begin position="115"/>
        <end position="130"/>
    </location>
</feature>
<feature type="strand" evidence="11">
    <location>
        <begin position="134"/>
        <end position="141"/>
    </location>
</feature>
<feature type="helix" evidence="11">
    <location>
        <begin position="143"/>
        <end position="154"/>
    </location>
</feature>
<feature type="helix" evidence="11">
    <location>
        <begin position="156"/>
        <end position="158"/>
    </location>
</feature>
<feature type="strand" evidence="11">
    <location>
        <begin position="159"/>
        <end position="166"/>
    </location>
</feature>
<feature type="helix" evidence="11">
    <location>
        <begin position="173"/>
        <end position="187"/>
    </location>
</feature>
<feature type="helix" evidence="11">
    <location>
        <begin position="190"/>
        <end position="195"/>
    </location>
</feature>
<feature type="helix" evidence="11">
    <location>
        <begin position="200"/>
        <end position="203"/>
    </location>
</feature>
<feature type="helix" evidence="11">
    <location>
        <begin position="204"/>
        <end position="217"/>
    </location>
</feature>
<feature type="helix" evidence="11">
    <location>
        <begin position="221"/>
        <end position="225"/>
    </location>
</feature>
<feature type="helix" evidence="11">
    <location>
        <begin position="228"/>
        <end position="232"/>
    </location>
</feature>
<feature type="helix" evidence="11">
    <location>
        <begin position="237"/>
        <end position="243"/>
    </location>
</feature>
<feature type="helix" evidence="11">
    <location>
        <begin position="245"/>
        <end position="250"/>
    </location>
</feature>
<feature type="helix" evidence="11">
    <location>
        <begin position="254"/>
        <end position="265"/>
    </location>
</feature>
<feature type="helix" evidence="11">
    <location>
        <begin position="269"/>
        <end position="273"/>
    </location>
</feature>
<feature type="helix" evidence="11">
    <location>
        <begin position="277"/>
        <end position="282"/>
    </location>
</feature>
<feature type="strand" evidence="11">
    <location>
        <begin position="286"/>
        <end position="291"/>
    </location>
</feature>
<feature type="strand" evidence="11">
    <location>
        <begin position="297"/>
        <end position="299"/>
    </location>
</feature>
<feature type="helix" evidence="11">
    <location>
        <begin position="301"/>
        <end position="308"/>
    </location>
</feature>
<feature type="helix" evidence="11">
    <location>
        <begin position="324"/>
        <end position="329"/>
    </location>
</feature>
<feature type="helix" evidence="11">
    <location>
        <begin position="335"/>
        <end position="347"/>
    </location>
</feature>
<proteinExistence type="evidence at protein level"/>
<evidence type="ECO:0000255" key="1"/>
<evidence type="ECO:0000269" key="2">
    <source>
    </source>
</evidence>
<evidence type="ECO:0000269" key="3">
    <source>
    </source>
</evidence>
<evidence type="ECO:0000303" key="4">
    <source>
    </source>
</evidence>
<evidence type="ECO:0000305" key="5"/>
<evidence type="ECO:0000305" key="6">
    <source>
    </source>
</evidence>
<evidence type="ECO:0000305" key="7">
    <source>
    </source>
</evidence>
<evidence type="ECO:0000312" key="8">
    <source>
        <dbReference type="EMBL" id="BAB98232.1"/>
    </source>
</evidence>
<evidence type="ECO:0007744" key="9">
    <source>
        <dbReference type="PDB" id="5D6O"/>
    </source>
</evidence>
<evidence type="ECO:0007744" key="10">
    <source>
        <dbReference type="PDB" id="5D7B"/>
    </source>
</evidence>
<evidence type="ECO:0007829" key="11">
    <source>
        <dbReference type="PDB" id="5D6O"/>
    </source>
</evidence>
<protein>
    <recommendedName>
        <fullName evidence="5">Probable esterase Cgl0839</fullName>
        <ecNumber evidence="6">3.1.1.-</ecNumber>
    </recommendedName>
    <alternativeName>
        <fullName evidence="4">HAT-like esterase</fullName>
    </alternativeName>
    <alternativeName>
        <fullName evidence="4">cgHle</fullName>
    </alternativeName>
</protein>
<organism>
    <name type="scientific">Corynebacterium glutamicum (strain ATCC 13032 / DSM 20300 / JCM 1318 / BCRC 11384 / CCUG 27702 / LMG 3730 / NBRC 12168 / NCIMB 10025 / NRRL B-2784 / 534)</name>
    <dbReference type="NCBI Taxonomy" id="196627"/>
    <lineage>
        <taxon>Bacteria</taxon>
        <taxon>Bacillati</taxon>
        <taxon>Actinomycetota</taxon>
        <taxon>Actinomycetes</taxon>
        <taxon>Mycobacteriales</taxon>
        <taxon>Corynebacteriaceae</taxon>
        <taxon>Corynebacterium</taxon>
    </lineage>
</organism>
<comment type="function">
    <text evidence="2">Esterase that catalyzes the hydrolysis of 4-nitrophenyl acetate in vitro.</text>
</comment>
<comment type="subunit">
    <text evidence="2 3">Homodimer.</text>
</comment>
<comment type="domain">
    <text evidence="3">The 3D structure excludes the ability of the enzyme to bind homoserine and acetyl-CoA, indicating that it cannot function as a homoserine acetyltransferase.</text>
</comment>
<comment type="similarity">
    <text evidence="7">Belongs to the AB hydrolase superfamily. Acetyl esterase family.</text>
</comment>
<gene>
    <name evidence="8" type="ordered locus">Cgl0839</name>
</gene>
<reference key="1">
    <citation type="journal article" date="2003" name="Appl. Microbiol. Biotechnol.">
        <title>The Corynebacterium glutamicum genome: features and impacts on biotechnological processes.</title>
        <authorList>
            <person name="Ikeda M."/>
            <person name="Nakagawa S."/>
        </authorList>
    </citation>
    <scope>NUCLEOTIDE SEQUENCE [LARGE SCALE GENOMIC DNA]</scope>
    <source>
        <strain>ATCC 13032 / DSM 20300 / JCM 1318 / BCRC 11384 / CCUG 27702 / LMG 3730 / NBRC 12168 / NCIMB 10025 / NRRL B-2784 / 534</strain>
    </source>
</reference>
<reference key="2">
    <citation type="journal article" date="2009" name="Acta Crystallogr. F">
        <title>Crystallization and preliminary crystallographic analysis of cgHle, a homoserine acetyltransferase homologue, from Corynebacterium glutamicum.</title>
        <authorList>
            <person name="Toelzer C."/>
            <person name="Pal S."/>
            <person name="Watzlawick H."/>
            <person name="Altenbuchner J."/>
            <person name="Niefind K."/>
        </authorList>
    </citation>
    <scope>FUNCTION AS AN ESTERASE</scope>
    <scope>SUBUNIT</scope>
    <scope>CRYSTALLIZATION</scope>
    <source>
        <strain>ATCC 13032 / DSM 20300 / JCM 1318 / BCRC 11384 / CCUG 27702 / LMG 3730 / NBRC 12168 / NCIMB 10025 / NRRL B-2784 / 534</strain>
    </source>
</reference>
<reference evidence="9 10" key="3">
    <citation type="journal article" date="2016" name="FEBS Lett.">
        <title>A novel esterase subfamily with alpha/beta-hydrolase fold suggested by structures of two bacterial enzymes homologous to L-homoserine O-acetyl transferases.</title>
        <authorList>
            <person name="Tolzer C."/>
            <person name="Pal S."/>
            <person name="Watzlawick H."/>
            <person name="Altenbuchner J."/>
            <person name="Niefind K."/>
        </authorList>
    </citation>
    <scope>X-RAY CRYSTALLOGRAPHY (1.80 ANGSTROMS)</scope>
    <scope>SUBUNIT</scope>
    <scope>DOMAIN</scope>
    <scope>ACTIVE SITE</scope>
</reference>
<accession>Q8NS43</accession>
<accession>Q6M6U7</accession>
<sequence>MLDNSFYTAEVQGPYETASIGRLELEEGGVIEDCWLAYATAGTLNEDKSNAILIPTWYSGTHQTWFQQYIGTDHALDPSKYFIISINQIGNGLSVSPANTADDSISMSKFPNVRIGDDVVAQDRLLRQEFGITELFAVVGGSMGAQQTYEWIVRFPDQVHRAAPIAGTAKNTPHDFIFTQTLNETVEADPGFNGGEYSSHEEVADGLRRQSHLWAAMGFSTEFWKQEAWRRLGLESKESVLADFLDPLFMSMDPNTLLNNAWKWQHGDVSRHTGGDLAAALGRVKAKTFVMPISEDMFFPVRDCAAEQALIPGSELRVIEDIAGHLGLFNVSENYIPQIDKNLKELFES</sequence>
<dbReference type="EC" id="3.1.1.-" evidence="6"/>
<dbReference type="EMBL" id="BA000036">
    <property type="protein sequence ID" value="BAB98232.1"/>
    <property type="molecule type" value="Genomic_DNA"/>
</dbReference>
<dbReference type="RefSeq" id="NP_600068.1">
    <property type="nucleotide sequence ID" value="NC_003450.3"/>
</dbReference>
<dbReference type="RefSeq" id="WP_003862382.1">
    <property type="nucleotide sequence ID" value="NC_006958.1"/>
</dbReference>
<dbReference type="PDB" id="5D6O">
    <property type="method" value="X-ray"/>
    <property type="resolution" value="1.80 A"/>
    <property type="chains" value="A/B/C/D=1-349"/>
</dbReference>
<dbReference type="PDB" id="5D7B">
    <property type="method" value="X-ray"/>
    <property type="resolution" value="3.20 A"/>
    <property type="chains" value="A/B=1-349"/>
</dbReference>
<dbReference type="PDBsum" id="5D6O"/>
<dbReference type="PDBsum" id="5D7B"/>
<dbReference type="SMR" id="Q8NS43"/>
<dbReference type="MINT" id="Q8NS43"/>
<dbReference type="STRING" id="196627.cg0961"/>
<dbReference type="ESTHER" id="corgl-CGL0839">
    <property type="family name" value="Homoserine_transacetylase_like_est"/>
</dbReference>
<dbReference type="KEGG" id="cgb:cg0961"/>
<dbReference type="KEGG" id="cgl:Cgl0839"/>
<dbReference type="PATRIC" id="fig|196627.13.peg.823"/>
<dbReference type="eggNOG" id="COG2021">
    <property type="taxonomic scope" value="Bacteria"/>
</dbReference>
<dbReference type="HOGENOM" id="CLU_028760_2_0_11"/>
<dbReference type="OrthoDB" id="9800754at2"/>
<dbReference type="BioCyc" id="CORYNE:G18NG-10408-MONOMER"/>
<dbReference type="EvolutionaryTrace" id="Q8NS43"/>
<dbReference type="Proteomes" id="UP000000582">
    <property type="component" value="Chromosome"/>
</dbReference>
<dbReference type="GO" id="GO:0004414">
    <property type="term" value="F:homoserine O-acetyltransferase activity"/>
    <property type="evidence" value="ECO:0007669"/>
    <property type="project" value="UniProtKB-EC"/>
</dbReference>
<dbReference type="GO" id="GO:0016787">
    <property type="term" value="F:hydrolase activity"/>
    <property type="evidence" value="ECO:0007669"/>
    <property type="project" value="UniProtKB-KW"/>
</dbReference>
<dbReference type="GO" id="GO:0009058">
    <property type="term" value="P:biosynthetic process"/>
    <property type="evidence" value="ECO:0007669"/>
    <property type="project" value="InterPro"/>
</dbReference>
<dbReference type="Gene3D" id="3.40.50.1820">
    <property type="entry name" value="alpha/beta hydrolase"/>
    <property type="match status" value="1"/>
</dbReference>
<dbReference type="InterPro" id="IPR000073">
    <property type="entry name" value="AB_hydrolase_1"/>
</dbReference>
<dbReference type="InterPro" id="IPR029058">
    <property type="entry name" value="AB_hydrolase_fold"/>
</dbReference>
<dbReference type="InterPro" id="IPR008220">
    <property type="entry name" value="HAT_MetX-like"/>
</dbReference>
<dbReference type="NCBIfam" id="NF005757">
    <property type="entry name" value="PRK07581.1"/>
    <property type="match status" value="1"/>
</dbReference>
<dbReference type="PANTHER" id="PTHR32268:SF15">
    <property type="entry name" value="HOMOSERINE ACETYLTRANSFERASE FAMILY PROTEIN (AFU_ORTHOLOGUE AFUA_1G15350)"/>
    <property type="match status" value="1"/>
</dbReference>
<dbReference type="PANTHER" id="PTHR32268">
    <property type="entry name" value="HOMOSERINE O-ACETYLTRANSFERASE"/>
    <property type="match status" value="1"/>
</dbReference>
<dbReference type="Pfam" id="PF00561">
    <property type="entry name" value="Abhydrolase_1"/>
    <property type="match status" value="1"/>
</dbReference>
<dbReference type="PIRSF" id="PIRSF000443">
    <property type="entry name" value="Homoser_Ac_trans"/>
    <property type="match status" value="1"/>
</dbReference>
<dbReference type="SUPFAM" id="SSF53474">
    <property type="entry name" value="alpha/beta-Hydrolases"/>
    <property type="match status" value="1"/>
</dbReference>